<organism>
    <name type="scientific">Helicobacter pylori (strain ATCC 700392 / 26695)</name>
    <name type="common">Campylobacter pylori</name>
    <dbReference type="NCBI Taxonomy" id="85962"/>
    <lineage>
        <taxon>Bacteria</taxon>
        <taxon>Pseudomonadati</taxon>
        <taxon>Campylobacterota</taxon>
        <taxon>Epsilonproteobacteria</taxon>
        <taxon>Campylobacterales</taxon>
        <taxon>Helicobacteraceae</taxon>
        <taxon>Helicobacter</taxon>
    </lineage>
</organism>
<reference key="1">
    <citation type="journal article" date="1997" name="Nature">
        <title>The complete genome sequence of the gastric pathogen Helicobacter pylori.</title>
        <authorList>
            <person name="Tomb J.-F."/>
            <person name="White O."/>
            <person name="Kerlavage A.R."/>
            <person name="Clayton R.A."/>
            <person name="Sutton G.G."/>
            <person name="Fleischmann R.D."/>
            <person name="Ketchum K.A."/>
            <person name="Klenk H.-P."/>
            <person name="Gill S.R."/>
            <person name="Dougherty B.A."/>
            <person name="Nelson K.E."/>
            <person name="Quackenbush J."/>
            <person name="Zhou L."/>
            <person name="Kirkness E.F."/>
            <person name="Peterson S.N."/>
            <person name="Loftus B.J."/>
            <person name="Richardson D.L."/>
            <person name="Dodson R.J."/>
            <person name="Khalak H.G."/>
            <person name="Glodek A."/>
            <person name="McKenney K."/>
            <person name="FitzGerald L.M."/>
            <person name="Lee N."/>
            <person name="Adams M.D."/>
            <person name="Hickey E.K."/>
            <person name="Berg D.E."/>
            <person name="Gocayne J.D."/>
            <person name="Utterback T.R."/>
            <person name="Peterson J.D."/>
            <person name="Kelley J.M."/>
            <person name="Cotton M.D."/>
            <person name="Weidman J.F."/>
            <person name="Fujii C."/>
            <person name="Bowman C."/>
            <person name="Watthey L."/>
            <person name="Wallin E."/>
            <person name="Hayes W.S."/>
            <person name="Borodovsky M."/>
            <person name="Karp P.D."/>
            <person name="Smith H.O."/>
            <person name="Fraser C.M."/>
            <person name="Venter J.C."/>
        </authorList>
    </citation>
    <scope>NUCLEOTIDE SEQUENCE [LARGE SCALE GENOMIC DNA]</scope>
    <source>
        <strain>ATCC 700392 / 26695</strain>
    </source>
</reference>
<protein>
    <recommendedName>
        <fullName>UPF0026 protein HP_0117</fullName>
    </recommendedName>
</protein>
<sequence>MAKENPPIVFGPVLSRRFGKSLGVDLSPSKKQCNYNCIYCELGKAKPIERMEEVIKVETLINAIQNALNNLTTPIDVLTITANGEPTLYPHLLELIQSIKPFLKGVKTLILSNGSLFYEPKVQQALKEFDIVKFSLDAIDLKAFERVDKPYSKDINKILEGILRFSQIYQGQLVAEVLLIKGVNDSANNLKLIAAFLKQINIARVDLSTIDRPSSFKAPKLSEDELLKCSLFFEGLCVSLPKRSITQAKKLISCGIDELLALISRRPLSAEEAPLILDSNAFKHLETLLNHKQITIKKVGSLEFYCAF</sequence>
<gene>
    <name type="ordered locus">HP_0117</name>
</gene>
<comment type="cofactor">
    <cofactor evidence="3">
        <name>[4Fe-4S] cluster</name>
        <dbReference type="ChEBI" id="CHEBI:49883"/>
    </cofactor>
    <text evidence="3">Binds 1 [4Fe-4S] cluster. The cluster is coordinated with 3 cysteines and an exchangeable S-adenosyl-L-methionine.</text>
</comment>
<comment type="similarity">
    <text evidence="3">Belongs to the UPF0026 family.</text>
</comment>
<dbReference type="EMBL" id="AE000511">
    <property type="protein sequence ID" value="AAD07185.1"/>
    <property type="molecule type" value="Genomic_DNA"/>
</dbReference>
<dbReference type="PIR" id="E64534">
    <property type="entry name" value="E64534"/>
</dbReference>
<dbReference type="RefSeq" id="NP_206917.1">
    <property type="nucleotide sequence ID" value="NC_000915.1"/>
</dbReference>
<dbReference type="RefSeq" id="WP_001040794.1">
    <property type="nucleotide sequence ID" value="NC_018939.1"/>
</dbReference>
<dbReference type="SMR" id="P56080"/>
<dbReference type="DIP" id="DIP-3297N"/>
<dbReference type="IntAct" id="P56080">
    <property type="interactions" value="2"/>
</dbReference>
<dbReference type="MINT" id="P56080"/>
<dbReference type="STRING" id="85962.HP_0117"/>
<dbReference type="PaxDb" id="85962-C694_00580"/>
<dbReference type="EnsemblBacteria" id="AAD07185">
    <property type="protein sequence ID" value="AAD07185"/>
    <property type="gene ID" value="HP_0117"/>
</dbReference>
<dbReference type="KEGG" id="heo:C694_00580"/>
<dbReference type="KEGG" id="hpy:HP_0117"/>
<dbReference type="PATRIC" id="fig|85962.47.peg.126"/>
<dbReference type="eggNOG" id="COG0731">
    <property type="taxonomic scope" value="Bacteria"/>
</dbReference>
<dbReference type="InParanoid" id="P56080"/>
<dbReference type="OrthoDB" id="9800840at2"/>
<dbReference type="PhylomeDB" id="P56080"/>
<dbReference type="Proteomes" id="UP000000429">
    <property type="component" value="Chromosome"/>
</dbReference>
<dbReference type="GO" id="GO:0051539">
    <property type="term" value="F:4 iron, 4 sulfur cluster binding"/>
    <property type="evidence" value="ECO:0007669"/>
    <property type="project" value="UniProtKB-KW"/>
</dbReference>
<dbReference type="GO" id="GO:0003824">
    <property type="term" value="F:catalytic activity"/>
    <property type="evidence" value="ECO:0007669"/>
    <property type="project" value="InterPro"/>
</dbReference>
<dbReference type="GO" id="GO:0046872">
    <property type="term" value="F:metal ion binding"/>
    <property type="evidence" value="ECO:0007669"/>
    <property type="project" value="UniProtKB-KW"/>
</dbReference>
<dbReference type="CDD" id="cd01335">
    <property type="entry name" value="Radical_SAM"/>
    <property type="match status" value="1"/>
</dbReference>
<dbReference type="Gene3D" id="3.20.20.70">
    <property type="entry name" value="Aldolase class I"/>
    <property type="match status" value="1"/>
</dbReference>
<dbReference type="InterPro" id="IPR013785">
    <property type="entry name" value="Aldolase_TIM"/>
</dbReference>
<dbReference type="InterPro" id="IPR040084">
    <property type="entry name" value="GTPase_Obg"/>
</dbReference>
<dbReference type="InterPro" id="IPR007197">
    <property type="entry name" value="rSAM"/>
</dbReference>
<dbReference type="PANTHER" id="PTHR43787">
    <property type="entry name" value="FEMO COFACTOR BIOSYNTHESIS PROTEIN NIFB-RELATED"/>
    <property type="match status" value="1"/>
</dbReference>
<dbReference type="PANTHER" id="PTHR43787:SF11">
    <property type="entry name" value="UPF0026 PROTEIN SLR1464"/>
    <property type="match status" value="1"/>
</dbReference>
<dbReference type="Pfam" id="PF04055">
    <property type="entry name" value="Radical_SAM"/>
    <property type="match status" value="1"/>
</dbReference>
<dbReference type="SFLD" id="SFLDS00029">
    <property type="entry name" value="Radical_SAM"/>
    <property type="match status" value="1"/>
</dbReference>
<dbReference type="SFLD" id="SFLDG01083">
    <property type="entry name" value="Uncharacterised_Radical_SAM_Su"/>
    <property type="match status" value="1"/>
</dbReference>
<dbReference type="SUPFAM" id="SSF102114">
    <property type="entry name" value="Radical SAM enzymes"/>
    <property type="match status" value="1"/>
</dbReference>
<dbReference type="PROSITE" id="PS51918">
    <property type="entry name" value="RADICAL_SAM"/>
    <property type="match status" value="1"/>
</dbReference>
<proteinExistence type="inferred from homology"/>
<evidence type="ECO:0000255" key="1"/>
<evidence type="ECO:0000255" key="2">
    <source>
        <dbReference type="PROSITE-ProRule" id="PRU01266"/>
    </source>
</evidence>
<evidence type="ECO:0000305" key="3"/>
<feature type="chain" id="PRO_0000217864" description="UPF0026 protein HP_0117">
    <location>
        <begin position="1"/>
        <end position="308"/>
    </location>
</feature>
<feature type="domain" description="Radical SAM core" evidence="2">
    <location>
        <begin position="18"/>
        <end position="248"/>
    </location>
</feature>
<feature type="binding site" evidence="1">
    <location>
        <position position="33"/>
    </location>
    <ligand>
        <name>[4Fe-4S] cluster</name>
        <dbReference type="ChEBI" id="CHEBI:49883"/>
        <note>4Fe-4S-S-AdoMet</note>
    </ligand>
</feature>
<feature type="binding site" evidence="1">
    <location>
        <position position="37"/>
    </location>
    <ligand>
        <name>[4Fe-4S] cluster</name>
        <dbReference type="ChEBI" id="CHEBI:49883"/>
        <note>4Fe-4S-S-AdoMet</note>
    </ligand>
</feature>
<feature type="binding site" evidence="1">
    <location>
        <position position="40"/>
    </location>
    <ligand>
        <name>[4Fe-4S] cluster</name>
        <dbReference type="ChEBI" id="CHEBI:49883"/>
        <note>4Fe-4S-S-AdoMet</note>
    </ligand>
</feature>
<accession>P56080</accession>
<keyword id="KW-0004">4Fe-4S</keyword>
<keyword id="KW-0408">Iron</keyword>
<keyword id="KW-0411">Iron-sulfur</keyword>
<keyword id="KW-0479">Metal-binding</keyword>
<keyword id="KW-1185">Reference proteome</keyword>
<keyword id="KW-0949">S-adenosyl-L-methionine</keyword>
<name>Y117_HELPY</name>